<protein>
    <recommendedName>
        <fullName evidence="1">Septation ring formation regulator EzrA</fullName>
    </recommendedName>
</protein>
<feature type="chain" id="PRO_0000172882" description="Septation ring formation regulator EzrA">
    <location>
        <begin position="1"/>
        <end position="564"/>
    </location>
</feature>
<feature type="topological domain" description="Extracellular" evidence="1">
    <location>
        <begin position="1"/>
        <end position="4"/>
    </location>
</feature>
<feature type="transmembrane region" description="Helical" evidence="1">
    <location>
        <begin position="5"/>
        <end position="23"/>
    </location>
</feature>
<feature type="topological domain" description="Cytoplasmic" evidence="1">
    <location>
        <begin position="24"/>
        <end position="564"/>
    </location>
</feature>
<feature type="coiled-coil region" evidence="1">
    <location>
        <begin position="99"/>
        <end position="138"/>
    </location>
</feature>
<feature type="coiled-coil region" evidence="1">
    <location>
        <begin position="190"/>
        <end position="223"/>
    </location>
</feature>
<feature type="coiled-coil region" evidence="1">
    <location>
        <begin position="271"/>
        <end position="300"/>
    </location>
</feature>
<feature type="coiled-coil region" evidence="1">
    <location>
        <begin position="350"/>
        <end position="435"/>
    </location>
</feature>
<feature type="coiled-coil region" evidence="1">
    <location>
        <begin position="471"/>
        <end position="550"/>
    </location>
</feature>
<dbReference type="EMBL" id="BX571857">
    <property type="protein sequence ID" value="CAG43446.1"/>
    <property type="molecule type" value="Genomic_DNA"/>
</dbReference>
<dbReference type="RefSeq" id="WP_000244865.1">
    <property type="nucleotide sequence ID" value="NC_002953.3"/>
</dbReference>
<dbReference type="SMR" id="Q6G8L0"/>
<dbReference type="KEGG" id="sas:SAS1644"/>
<dbReference type="HOGENOM" id="CLU_034079_1_0_9"/>
<dbReference type="GO" id="GO:0005886">
    <property type="term" value="C:plasma membrane"/>
    <property type="evidence" value="ECO:0007669"/>
    <property type="project" value="UniProtKB-SubCell"/>
</dbReference>
<dbReference type="GO" id="GO:0005940">
    <property type="term" value="C:septin ring"/>
    <property type="evidence" value="ECO:0007669"/>
    <property type="project" value="InterPro"/>
</dbReference>
<dbReference type="GO" id="GO:0000917">
    <property type="term" value="P:division septum assembly"/>
    <property type="evidence" value="ECO:0007669"/>
    <property type="project" value="UniProtKB-KW"/>
</dbReference>
<dbReference type="GO" id="GO:0000921">
    <property type="term" value="P:septin ring assembly"/>
    <property type="evidence" value="ECO:0007669"/>
    <property type="project" value="InterPro"/>
</dbReference>
<dbReference type="HAMAP" id="MF_00728">
    <property type="entry name" value="EzrA"/>
    <property type="match status" value="1"/>
</dbReference>
<dbReference type="InterPro" id="IPR010379">
    <property type="entry name" value="EzrA"/>
</dbReference>
<dbReference type="NCBIfam" id="NF003412">
    <property type="entry name" value="PRK04778.1-6"/>
    <property type="match status" value="1"/>
</dbReference>
<dbReference type="Pfam" id="PF06160">
    <property type="entry name" value="EzrA"/>
    <property type="match status" value="1"/>
</dbReference>
<gene>
    <name evidence="1" type="primary">ezrA</name>
    <name type="ordered locus">SAS1644</name>
</gene>
<name>EZRA_STAAS</name>
<reference key="1">
    <citation type="journal article" date="2004" name="Proc. Natl. Acad. Sci. U.S.A.">
        <title>Complete genomes of two clinical Staphylococcus aureus strains: evidence for the rapid evolution of virulence and drug resistance.</title>
        <authorList>
            <person name="Holden M.T.G."/>
            <person name="Feil E.J."/>
            <person name="Lindsay J.A."/>
            <person name="Peacock S.J."/>
            <person name="Day N.P.J."/>
            <person name="Enright M.C."/>
            <person name="Foster T.J."/>
            <person name="Moore C.E."/>
            <person name="Hurst L."/>
            <person name="Atkin R."/>
            <person name="Barron A."/>
            <person name="Bason N."/>
            <person name="Bentley S.D."/>
            <person name="Chillingworth C."/>
            <person name="Chillingworth T."/>
            <person name="Churcher C."/>
            <person name="Clark L."/>
            <person name="Corton C."/>
            <person name="Cronin A."/>
            <person name="Doggett J."/>
            <person name="Dowd L."/>
            <person name="Feltwell T."/>
            <person name="Hance Z."/>
            <person name="Harris B."/>
            <person name="Hauser H."/>
            <person name="Holroyd S."/>
            <person name="Jagels K."/>
            <person name="James K.D."/>
            <person name="Lennard N."/>
            <person name="Line A."/>
            <person name="Mayes R."/>
            <person name="Moule S."/>
            <person name="Mungall K."/>
            <person name="Ormond D."/>
            <person name="Quail M.A."/>
            <person name="Rabbinowitsch E."/>
            <person name="Rutherford K.M."/>
            <person name="Sanders M."/>
            <person name="Sharp S."/>
            <person name="Simmonds M."/>
            <person name="Stevens K."/>
            <person name="Whitehead S."/>
            <person name="Barrell B.G."/>
            <person name="Spratt B.G."/>
            <person name="Parkhill J."/>
        </authorList>
    </citation>
    <scope>NUCLEOTIDE SEQUENCE [LARGE SCALE GENOMIC DNA]</scope>
    <source>
        <strain>MSSA476</strain>
    </source>
</reference>
<keyword id="KW-0131">Cell cycle</keyword>
<keyword id="KW-0132">Cell division</keyword>
<keyword id="KW-1003">Cell membrane</keyword>
<keyword id="KW-0175">Coiled coil</keyword>
<keyword id="KW-0472">Membrane</keyword>
<keyword id="KW-0717">Septation</keyword>
<keyword id="KW-0812">Transmembrane</keyword>
<keyword id="KW-1133">Transmembrane helix</keyword>
<proteinExistence type="inferred from homology"/>
<sequence>MVLYIILAIIVIILIAVGVLFYLRSNKRQIIEKAIERKNEIETLPFDQNLAQLSKLNLKGETKTKYDAMKKDNVESTNKYLAPVEEKIHNAEALLDKFSFNASQSEIDDANELMDSYEQSYQQQLEDVNEIIALYKDNDELYDKCKVDYREMKRDVLANRHQFGEAASLLETEIEKFEPRLEQYEVLKADGNYVQAHNHIAALNEQMKQLRSYMEEIPELIRETQKELPGQFQDLKYGCRDLKVEGYDLDHVKVDSTLQSLKTELSFVEPLISRLELEEANDKLANINDKLDDMYDLIEHEVKAKNDVEETKDIITDNLFKAKDMNYTLQTEIEYVRENYYINESDAQSVRQFENEIQSLISVYDDILKEMSKSAVRYSEVQDNLQYLEDHVTVINDKQEKLQNHLIQLREDEAEAEDNLLRVQSKKEEVYRRLLASNLTSVPERFIIMKNEIDHEVRDVNEQFSERPIHVKQLKDKVSKIVIQMNTFEDEANDVLVNAVYAEKLIQYGNRYRKDYSNVDKSLNEAERLFKNNRYKRAIEIAEQALESVEPGVTKHIEEEVIKQ</sequence>
<comment type="function">
    <text evidence="1">Negative regulator of FtsZ ring formation; modulates the frequency and position of FtsZ ring formation. Inhibits FtsZ ring formation at polar sites. Interacts either with FtsZ or with one of its binding partners to promote depolymerization.</text>
</comment>
<comment type="subcellular location">
    <subcellularLocation>
        <location>Cell membrane</location>
        <topology>Single-pass membrane protein</topology>
    </subcellularLocation>
    <text evidence="1">Colocalized with FtsZ to the nascent septal site.</text>
</comment>
<comment type="similarity">
    <text evidence="1">Belongs to the EzrA family.</text>
</comment>
<organism>
    <name type="scientific">Staphylococcus aureus (strain MSSA476)</name>
    <dbReference type="NCBI Taxonomy" id="282459"/>
    <lineage>
        <taxon>Bacteria</taxon>
        <taxon>Bacillati</taxon>
        <taxon>Bacillota</taxon>
        <taxon>Bacilli</taxon>
        <taxon>Bacillales</taxon>
        <taxon>Staphylococcaceae</taxon>
        <taxon>Staphylococcus</taxon>
    </lineage>
</organism>
<accession>Q6G8L0</accession>
<evidence type="ECO:0000255" key="1">
    <source>
        <dbReference type="HAMAP-Rule" id="MF_00728"/>
    </source>
</evidence>